<gene>
    <name evidence="1" type="primary">trmD</name>
    <name type="ordered locus">BCG_2927c</name>
</gene>
<evidence type="ECO:0000255" key="1">
    <source>
        <dbReference type="HAMAP-Rule" id="MF_00605"/>
    </source>
</evidence>
<protein>
    <recommendedName>
        <fullName evidence="1">tRNA (guanine-N(1)-)-methyltransferase</fullName>
        <ecNumber evidence="1">2.1.1.228</ecNumber>
    </recommendedName>
    <alternativeName>
        <fullName evidence="1">M1G-methyltransferase</fullName>
    </alternativeName>
    <alternativeName>
        <fullName evidence="1">tRNA [GM37] methyltransferase</fullName>
    </alternativeName>
</protein>
<accession>A1KMQ0</accession>
<feature type="chain" id="PRO_1000006497" description="tRNA (guanine-N(1)-)-methyltransferase">
    <location>
        <begin position="1"/>
        <end position="230"/>
    </location>
</feature>
<feature type="binding site" evidence="1">
    <location>
        <position position="109"/>
    </location>
    <ligand>
        <name>S-adenosyl-L-methionine</name>
        <dbReference type="ChEBI" id="CHEBI:59789"/>
    </ligand>
</feature>
<feature type="binding site" evidence="1">
    <location>
        <begin position="133"/>
        <end position="138"/>
    </location>
    <ligand>
        <name>S-adenosyl-L-methionine</name>
        <dbReference type="ChEBI" id="CHEBI:59789"/>
    </ligand>
</feature>
<sequence length="230" mass="25166">MRIDIVTIFPACLDPLRQSLPGKAIESGLVDLNVHDLRRWTHDVHHSVDDAPYGGGPGMVMKAPVWGEALDEICSSETLLIVPTPAGVLFTQATAQRWTTESHLVFACGRYEGIDQRVVQDAARRMRVEEVSIGDYVLPGGESAAVVMVEAVLRLLAGVLGNPASHQDDSHSTGLDGLLEGPSYTRPASWRGLDVPEVLLSGDHARIAAWRREVSLQRTRERRPDLSHPD</sequence>
<name>TRMD_MYCBP</name>
<reference key="1">
    <citation type="journal article" date="2007" name="Proc. Natl. Acad. Sci. U.S.A.">
        <title>Genome plasticity of BCG and impact on vaccine efficacy.</title>
        <authorList>
            <person name="Brosch R."/>
            <person name="Gordon S.V."/>
            <person name="Garnier T."/>
            <person name="Eiglmeier K."/>
            <person name="Frigui W."/>
            <person name="Valenti P."/>
            <person name="Dos Santos S."/>
            <person name="Duthoy S."/>
            <person name="Lacroix C."/>
            <person name="Garcia-Pelayo C."/>
            <person name="Inwald J.K."/>
            <person name="Golby P."/>
            <person name="Garcia J.N."/>
            <person name="Hewinson R.G."/>
            <person name="Behr M.A."/>
            <person name="Quail M.A."/>
            <person name="Churcher C."/>
            <person name="Barrell B.G."/>
            <person name="Parkhill J."/>
            <person name="Cole S.T."/>
        </authorList>
    </citation>
    <scope>NUCLEOTIDE SEQUENCE [LARGE SCALE GENOMIC DNA]</scope>
    <source>
        <strain>BCG / Pasteur 1173P2</strain>
    </source>
</reference>
<dbReference type="EC" id="2.1.1.228" evidence="1"/>
<dbReference type="EMBL" id="AM408590">
    <property type="protein sequence ID" value="CAL72916.1"/>
    <property type="molecule type" value="Genomic_DNA"/>
</dbReference>
<dbReference type="RefSeq" id="WP_003414722.1">
    <property type="nucleotide sequence ID" value="NC_008769.1"/>
</dbReference>
<dbReference type="SMR" id="A1KMQ0"/>
<dbReference type="KEGG" id="mbb:BCG_2927c"/>
<dbReference type="HOGENOM" id="CLU_047363_0_0_11"/>
<dbReference type="Proteomes" id="UP000001472">
    <property type="component" value="Chromosome"/>
</dbReference>
<dbReference type="GO" id="GO:0005829">
    <property type="term" value="C:cytosol"/>
    <property type="evidence" value="ECO:0007669"/>
    <property type="project" value="TreeGrafter"/>
</dbReference>
<dbReference type="GO" id="GO:0052906">
    <property type="term" value="F:tRNA (guanine(37)-N1)-methyltransferase activity"/>
    <property type="evidence" value="ECO:0007669"/>
    <property type="project" value="UniProtKB-UniRule"/>
</dbReference>
<dbReference type="GO" id="GO:0002939">
    <property type="term" value="P:tRNA N1-guanine methylation"/>
    <property type="evidence" value="ECO:0007669"/>
    <property type="project" value="TreeGrafter"/>
</dbReference>
<dbReference type="CDD" id="cd18080">
    <property type="entry name" value="TrmD-like"/>
    <property type="match status" value="1"/>
</dbReference>
<dbReference type="FunFam" id="1.10.1270.20:FF:000004">
    <property type="entry name" value="tRNA (guanine-N(1)-)-methyltransferase"/>
    <property type="match status" value="1"/>
</dbReference>
<dbReference type="FunFam" id="3.40.1280.10:FF:000001">
    <property type="entry name" value="tRNA (guanine-N(1)-)-methyltransferase"/>
    <property type="match status" value="1"/>
</dbReference>
<dbReference type="Gene3D" id="3.40.1280.10">
    <property type="match status" value="1"/>
</dbReference>
<dbReference type="Gene3D" id="1.10.1270.20">
    <property type="entry name" value="tRNA(m1g37)methyltransferase, domain 2"/>
    <property type="match status" value="1"/>
</dbReference>
<dbReference type="HAMAP" id="MF_00605">
    <property type="entry name" value="TrmD"/>
    <property type="match status" value="1"/>
</dbReference>
<dbReference type="InterPro" id="IPR029028">
    <property type="entry name" value="Alpha/beta_knot_MTases"/>
</dbReference>
<dbReference type="InterPro" id="IPR023148">
    <property type="entry name" value="tRNA_m1G_MeTrfase_C_sf"/>
</dbReference>
<dbReference type="InterPro" id="IPR002649">
    <property type="entry name" value="tRNA_m1G_MeTrfase_TrmD"/>
</dbReference>
<dbReference type="InterPro" id="IPR029026">
    <property type="entry name" value="tRNA_m1G_MTases_N"/>
</dbReference>
<dbReference type="InterPro" id="IPR016009">
    <property type="entry name" value="tRNA_MeTrfase_TRMD/TRM10"/>
</dbReference>
<dbReference type="NCBIfam" id="NF000648">
    <property type="entry name" value="PRK00026.1"/>
    <property type="match status" value="1"/>
</dbReference>
<dbReference type="NCBIfam" id="TIGR00088">
    <property type="entry name" value="trmD"/>
    <property type="match status" value="1"/>
</dbReference>
<dbReference type="PANTHER" id="PTHR46417">
    <property type="entry name" value="TRNA (GUANINE-N(1)-)-METHYLTRANSFERASE"/>
    <property type="match status" value="1"/>
</dbReference>
<dbReference type="PANTHER" id="PTHR46417:SF1">
    <property type="entry name" value="TRNA (GUANINE-N(1)-)-METHYLTRANSFERASE"/>
    <property type="match status" value="1"/>
</dbReference>
<dbReference type="Pfam" id="PF01746">
    <property type="entry name" value="tRNA_m1G_MT"/>
    <property type="match status" value="1"/>
</dbReference>
<dbReference type="PIRSF" id="PIRSF000386">
    <property type="entry name" value="tRNA_mtase"/>
    <property type="match status" value="1"/>
</dbReference>
<dbReference type="SUPFAM" id="SSF75217">
    <property type="entry name" value="alpha/beta knot"/>
    <property type="match status" value="1"/>
</dbReference>
<comment type="function">
    <text evidence="1">Specifically methylates guanosine-37 in various tRNAs.</text>
</comment>
<comment type="catalytic activity">
    <reaction evidence="1">
        <text>guanosine(37) in tRNA + S-adenosyl-L-methionine = N(1)-methylguanosine(37) in tRNA + S-adenosyl-L-homocysteine + H(+)</text>
        <dbReference type="Rhea" id="RHEA:36899"/>
        <dbReference type="Rhea" id="RHEA-COMP:10145"/>
        <dbReference type="Rhea" id="RHEA-COMP:10147"/>
        <dbReference type="ChEBI" id="CHEBI:15378"/>
        <dbReference type="ChEBI" id="CHEBI:57856"/>
        <dbReference type="ChEBI" id="CHEBI:59789"/>
        <dbReference type="ChEBI" id="CHEBI:73542"/>
        <dbReference type="ChEBI" id="CHEBI:74269"/>
        <dbReference type="EC" id="2.1.1.228"/>
    </reaction>
</comment>
<comment type="subunit">
    <text evidence="1">Homodimer.</text>
</comment>
<comment type="subcellular location">
    <subcellularLocation>
        <location evidence="1">Cytoplasm</location>
    </subcellularLocation>
</comment>
<comment type="similarity">
    <text evidence="1">Belongs to the RNA methyltransferase TrmD family.</text>
</comment>
<keyword id="KW-0963">Cytoplasm</keyword>
<keyword id="KW-0489">Methyltransferase</keyword>
<keyword id="KW-0949">S-adenosyl-L-methionine</keyword>
<keyword id="KW-0808">Transferase</keyword>
<keyword id="KW-0819">tRNA processing</keyword>
<proteinExistence type="inferred from homology"/>
<organism>
    <name type="scientific">Mycobacterium bovis (strain BCG / Pasteur 1173P2)</name>
    <dbReference type="NCBI Taxonomy" id="410289"/>
    <lineage>
        <taxon>Bacteria</taxon>
        <taxon>Bacillati</taxon>
        <taxon>Actinomycetota</taxon>
        <taxon>Actinomycetes</taxon>
        <taxon>Mycobacteriales</taxon>
        <taxon>Mycobacteriaceae</taxon>
        <taxon>Mycobacterium</taxon>
        <taxon>Mycobacterium tuberculosis complex</taxon>
    </lineage>
</organism>